<sequence>METIAKHCHARSSAQKVRLVADLIRGKKVSQALEVLTYTNKKAAGLVKKVLESAIANAEHNDGADIDDLKVAKIFVDEGPSMKRIMPRAKGRADRILKRTSHITVVVSDR</sequence>
<protein>
    <recommendedName>
        <fullName evidence="1">Large ribosomal subunit protein uL22</fullName>
    </recommendedName>
    <alternativeName>
        <fullName evidence="2">50S ribosomal protein L22</fullName>
    </alternativeName>
</protein>
<evidence type="ECO:0000255" key="1">
    <source>
        <dbReference type="HAMAP-Rule" id="MF_01331"/>
    </source>
</evidence>
<evidence type="ECO:0000305" key="2"/>
<name>RL22_PECAS</name>
<reference key="1">
    <citation type="journal article" date="2004" name="Proc. Natl. Acad. Sci. U.S.A.">
        <title>Genome sequence of the enterobacterial phytopathogen Erwinia carotovora subsp. atroseptica and characterization of virulence factors.</title>
        <authorList>
            <person name="Bell K.S."/>
            <person name="Sebaihia M."/>
            <person name="Pritchard L."/>
            <person name="Holden M.T.G."/>
            <person name="Hyman L.J."/>
            <person name="Holeva M.C."/>
            <person name="Thomson N.R."/>
            <person name="Bentley S.D."/>
            <person name="Churcher L.J.C."/>
            <person name="Mungall K."/>
            <person name="Atkin R."/>
            <person name="Bason N."/>
            <person name="Brooks K."/>
            <person name="Chillingworth T."/>
            <person name="Clark K."/>
            <person name="Doggett J."/>
            <person name="Fraser A."/>
            <person name="Hance Z."/>
            <person name="Hauser H."/>
            <person name="Jagels K."/>
            <person name="Moule S."/>
            <person name="Norbertczak H."/>
            <person name="Ormond D."/>
            <person name="Price C."/>
            <person name="Quail M.A."/>
            <person name="Sanders M."/>
            <person name="Walker D."/>
            <person name="Whitehead S."/>
            <person name="Salmond G.P.C."/>
            <person name="Birch P.R.J."/>
            <person name="Parkhill J."/>
            <person name="Toth I.K."/>
        </authorList>
    </citation>
    <scope>NUCLEOTIDE SEQUENCE [LARGE SCALE GENOMIC DNA]</scope>
    <source>
        <strain>SCRI 1043 / ATCC BAA-672</strain>
    </source>
</reference>
<dbReference type="EMBL" id="BX950851">
    <property type="protein sequence ID" value="CAG76923.1"/>
    <property type="molecule type" value="Genomic_DNA"/>
</dbReference>
<dbReference type="RefSeq" id="WP_005970275.1">
    <property type="nucleotide sequence ID" value="NC_004547.2"/>
</dbReference>
<dbReference type="SMR" id="Q6CZX5"/>
<dbReference type="STRING" id="218491.ECA4026"/>
<dbReference type="GeneID" id="93391975"/>
<dbReference type="KEGG" id="eca:ECA4026"/>
<dbReference type="eggNOG" id="COG0091">
    <property type="taxonomic scope" value="Bacteria"/>
</dbReference>
<dbReference type="HOGENOM" id="CLU_083987_3_3_6"/>
<dbReference type="OrthoDB" id="9805969at2"/>
<dbReference type="Proteomes" id="UP000007966">
    <property type="component" value="Chromosome"/>
</dbReference>
<dbReference type="GO" id="GO:0022625">
    <property type="term" value="C:cytosolic large ribosomal subunit"/>
    <property type="evidence" value="ECO:0007669"/>
    <property type="project" value="TreeGrafter"/>
</dbReference>
<dbReference type="GO" id="GO:0019843">
    <property type="term" value="F:rRNA binding"/>
    <property type="evidence" value="ECO:0007669"/>
    <property type="project" value="UniProtKB-UniRule"/>
</dbReference>
<dbReference type="GO" id="GO:0003735">
    <property type="term" value="F:structural constituent of ribosome"/>
    <property type="evidence" value="ECO:0007669"/>
    <property type="project" value="InterPro"/>
</dbReference>
<dbReference type="GO" id="GO:0006412">
    <property type="term" value="P:translation"/>
    <property type="evidence" value="ECO:0007669"/>
    <property type="project" value="UniProtKB-UniRule"/>
</dbReference>
<dbReference type="CDD" id="cd00336">
    <property type="entry name" value="Ribosomal_L22"/>
    <property type="match status" value="1"/>
</dbReference>
<dbReference type="FunFam" id="3.90.470.10:FF:000001">
    <property type="entry name" value="50S ribosomal protein L22"/>
    <property type="match status" value="1"/>
</dbReference>
<dbReference type="Gene3D" id="3.90.470.10">
    <property type="entry name" value="Ribosomal protein L22/L17"/>
    <property type="match status" value="1"/>
</dbReference>
<dbReference type="HAMAP" id="MF_01331_B">
    <property type="entry name" value="Ribosomal_uL22_B"/>
    <property type="match status" value="1"/>
</dbReference>
<dbReference type="InterPro" id="IPR001063">
    <property type="entry name" value="Ribosomal_uL22"/>
</dbReference>
<dbReference type="InterPro" id="IPR005727">
    <property type="entry name" value="Ribosomal_uL22_bac/chlpt-type"/>
</dbReference>
<dbReference type="InterPro" id="IPR047867">
    <property type="entry name" value="Ribosomal_uL22_bac/org-type"/>
</dbReference>
<dbReference type="InterPro" id="IPR018260">
    <property type="entry name" value="Ribosomal_uL22_CS"/>
</dbReference>
<dbReference type="InterPro" id="IPR036394">
    <property type="entry name" value="Ribosomal_uL22_sf"/>
</dbReference>
<dbReference type="NCBIfam" id="TIGR01044">
    <property type="entry name" value="rplV_bact"/>
    <property type="match status" value="1"/>
</dbReference>
<dbReference type="PANTHER" id="PTHR13501">
    <property type="entry name" value="CHLOROPLAST 50S RIBOSOMAL PROTEIN L22-RELATED"/>
    <property type="match status" value="1"/>
</dbReference>
<dbReference type="PANTHER" id="PTHR13501:SF8">
    <property type="entry name" value="LARGE RIBOSOMAL SUBUNIT PROTEIN UL22M"/>
    <property type="match status" value="1"/>
</dbReference>
<dbReference type="Pfam" id="PF00237">
    <property type="entry name" value="Ribosomal_L22"/>
    <property type="match status" value="1"/>
</dbReference>
<dbReference type="SUPFAM" id="SSF54843">
    <property type="entry name" value="Ribosomal protein L22"/>
    <property type="match status" value="1"/>
</dbReference>
<dbReference type="PROSITE" id="PS00464">
    <property type="entry name" value="RIBOSOMAL_L22"/>
    <property type="match status" value="1"/>
</dbReference>
<proteinExistence type="inferred from homology"/>
<accession>Q6CZX5</accession>
<comment type="function">
    <text evidence="1">This protein binds specifically to 23S rRNA; its binding is stimulated by other ribosomal proteins, e.g. L4, L17, and L20. It is important during the early stages of 50S assembly. It makes multiple contacts with different domains of the 23S rRNA in the assembled 50S subunit and ribosome (By similarity).</text>
</comment>
<comment type="function">
    <text evidence="1">The globular domain of the protein is located near the polypeptide exit tunnel on the outside of the subunit, while an extended beta-hairpin is found that lines the wall of the exit tunnel in the center of the 70S ribosome.</text>
</comment>
<comment type="subunit">
    <text evidence="1">Part of the 50S ribosomal subunit.</text>
</comment>
<comment type="similarity">
    <text evidence="1">Belongs to the universal ribosomal protein uL22 family.</text>
</comment>
<gene>
    <name evidence="1" type="primary">rplV</name>
    <name type="ordered locus">ECA4026</name>
</gene>
<organism>
    <name type="scientific">Pectobacterium atrosepticum (strain SCRI 1043 / ATCC BAA-672)</name>
    <name type="common">Erwinia carotovora subsp. atroseptica</name>
    <dbReference type="NCBI Taxonomy" id="218491"/>
    <lineage>
        <taxon>Bacteria</taxon>
        <taxon>Pseudomonadati</taxon>
        <taxon>Pseudomonadota</taxon>
        <taxon>Gammaproteobacteria</taxon>
        <taxon>Enterobacterales</taxon>
        <taxon>Pectobacteriaceae</taxon>
        <taxon>Pectobacterium</taxon>
    </lineage>
</organism>
<feature type="chain" id="PRO_0000243148" description="Large ribosomal subunit protein uL22">
    <location>
        <begin position="1"/>
        <end position="110"/>
    </location>
</feature>
<keyword id="KW-1185">Reference proteome</keyword>
<keyword id="KW-0687">Ribonucleoprotein</keyword>
<keyword id="KW-0689">Ribosomal protein</keyword>
<keyword id="KW-0694">RNA-binding</keyword>
<keyword id="KW-0699">rRNA-binding</keyword>